<organism>
    <name type="scientific">Cronobacter sakazakii (strain ATCC BAA-894)</name>
    <name type="common">Enterobacter sakazakii</name>
    <dbReference type="NCBI Taxonomy" id="290339"/>
    <lineage>
        <taxon>Bacteria</taxon>
        <taxon>Pseudomonadati</taxon>
        <taxon>Pseudomonadota</taxon>
        <taxon>Gammaproteobacteria</taxon>
        <taxon>Enterobacterales</taxon>
        <taxon>Enterobacteriaceae</taxon>
        <taxon>Cronobacter</taxon>
    </lineage>
</organism>
<gene>
    <name evidence="1" type="primary">lpxA</name>
    <name type="ordered locus">ESA_03160</name>
</gene>
<name>LPXA_CROS8</name>
<evidence type="ECO:0000255" key="1">
    <source>
        <dbReference type="HAMAP-Rule" id="MF_00387"/>
    </source>
</evidence>
<reference key="1">
    <citation type="journal article" date="2010" name="PLoS ONE">
        <title>Genome sequence of Cronobacter sakazakii BAA-894 and comparative genomic hybridization analysis with other Cronobacter species.</title>
        <authorList>
            <person name="Kucerova E."/>
            <person name="Clifton S.W."/>
            <person name="Xia X.Q."/>
            <person name="Long F."/>
            <person name="Porwollik S."/>
            <person name="Fulton L."/>
            <person name="Fronick C."/>
            <person name="Minx P."/>
            <person name="Kyung K."/>
            <person name="Warren W."/>
            <person name="Fulton R."/>
            <person name="Feng D."/>
            <person name="Wollam A."/>
            <person name="Shah N."/>
            <person name="Bhonagiri V."/>
            <person name="Nash W.E."/>
            <person name="Hallsworth-Pepin K."/>
            <person name="Wilson R.K."/>
            <person name="McClelland M."/>
            <person name="Forsythe S.J."/>
        </authorList>
    </citation>
    <scope>NUCLEOTIDE SEQUENCE [LARGE SCALE GENOMIC DNA]</scope>
    <source>
        <strain>ATCC BAA-894</strain>
    </source>
</reference>
<accession>A7MI18</accession>
<protein>
    <recommendedName>
        <fullName evidence="1">Acyl-[acyl-carrier-protein]--UDP-N-acetylglucosamine O-acyltransferase</fullName>
        <shortName evidence="1">UDP-N-acetylglucosamine acyltransferase</shortName>
        <ecNumber evidence="1">2.3.1.129</ecNumber>
    </recommendedName>
</protein>
<keyword id="KW-0012">Acyltransferase</keyword>
<keyword id="KW-0963">Cytoplasm</keyword>
<keyword id="KW-0441">Lipid A biosynthesis</keyword>
<keyword id="KW-0444">Lipid biosynthesis</keyword>
<keyword id="KW-0443">Lipid metabolism</keyword>
<keyword id="KW-1185">Reference proteome</keyword>
<keyword id="KW-0677">Repeat</keyword>
<keyword id="KW-0808">Transferase</keyword>
<feature type="chain" id="PRO_1000013165" description="Acyl-[acyl-carrier-protein]--UDP-N-acetylglucosamine O-acyltransferase">
    <location>
        <begin position="1"/>
        <end position="262"/>
    </location>
</feature>
<comment type="function">
    <text evidence="1">Involved in the biosynthesis of lipid A, a phosphorylated glycolipid that anchors the lipopolysaccharide to the outer membrane of the cell.</text>
</comment>
<comment type="catalytic activity">
    <reaction evidence="1">
        <text>a (3R)-hydroxyacyl-[ACP] + UDP-N-acetyl-alpha-D-glucosamine = a UDP-3-O-[(3R)-3-hydroxyacyl]-N-acetyl-alpha-D-glucosamine + holo-[ACP]</text>
        <dbReference type="Rhea" id="RHEA:67812"/>
        <dbReference type="Rhea" id="RHEA-COMP:9685"/>
        <dbReference type="Rhea" id="RHEA-COMP:9945"/>
        <dbReference type="ChEBI" id="CHEBI:57705"/>
        <dbReference type="ChEBI" id="CHEBI:64479"/>
        <dbReference type="ChEBI" id="CHEBI:78827"/>
        <dbReference type="ChEBI" id="CHEBI:173225"/>
        <dbReference type="EC" id="2.3.1.129"/>
    </reaction>
</comment>
<comment type="pathway">
    <text evidence="1">Glycolipid biosynthesis; lipid IV(A) biosynthesis; lipid IV(A) from (3R)-3-hydroxytetradecanoyl-[acyl-carrier-protein] and UDP-N-acetyl-alpha-D-glucosamine: step 1/6.</text>
</comment>
<comment type="subunit">
    <text evidence="1">Homotrimer.</text>
</comment>
<comment type="subcellular location">
    <subcellularLocation>
        <location evidence="1">Cytoplasm</location>
    </subcellularLocation>
</comment>
<comment type="similarity">
    <text evidence="1">Belongs to the transferase hexapeptide repeat family. LpxA subfamily.</text>
</comment>
<dbReference type="EC" id="2.3.1.129" evidence="1"/>
<dbReference type="EMBL" id="CP000783">
    <property type="protein sequence ID" value="ABU78383.1"/>
    <property type="molecule type" value="Genomic_DNA"/>
</dbReference>
<dbReference type="RefSeq" id="WP_007790874.1">
    <property type="nucleotide sequence ID" value="NC_009778.1"/>
</dbReference>
<dbReference type="SMR" id="A7MI18"/>
<dbReference type="KEGG" id="esa:ESA_03160"/>
<dbReference type="HOGENOM" id="CLU_061249_0_0_6"/>
<dbReference type="UniPathway" id="UPA00359">
    <property type="reaction ID" value="UER00477"/>
</dbReference>
<dbReference type="Proteomes" id="UP000000260">
    <property type="component" value="Chromosome"/>
</dbReference>
<dbReference type="GO" id="GO:0005737">
    <property type="term" value="C:cytoplasm"/>
    <property type="evidence" value="ECO:0007669"/>
    <property type="project" value="UniProtKB-SubCell"/>
</dbReference>
<dbReference type="GO" id="GO:0016020">
    <property type="term" value="C:membrane"/>
    <property type="evidence" value="ECO:0007669"/>
    <property type="project" value="GOC"/>
</dbReference>
<dbReference type="GO" id="GO:0008780">
    <property type="term" value="F:acyl-[acyl-carrier-protein]-UDP-N-acetylglucosamine O-acyltransferase activity"/>
    <property type="evidence" value="ECO:0007669"/>
    <property type="project" value="UniProtKB-UniRule"/>
</dbReference>
<dbReference type="GO" id="GO:0009245">
    <property type="term" value="P:lipid A biosynthetic process"/>
    <property type="evidence" value="ECO:0007669"/>
    <property type="project" value="UniProtKB-UniRule"/>
</dbReference>
<dbReference type="CDD" id="cd03351">
    <property type="entry name" value="LbH_UDP-GlcNAc_AT"/>
    <property type="match status" value="1"/>
</dbReference>
<dbReference type="FunFam" id="1.20.1180.10:FF:000001">
    <property type="entry name" value="Acyl-[acyl-carrier-protein]--UDP-N-acetylglucosamine O-acyltransferase"/>
    <property type="match status" value="1"/>
</dbReference>
<dbReference type="FunFam" id="2.160.10.10:FF:000003">
    <property type="entry name" value="Acyl-[acyl-carrier-protein]--UDP-N-acetylglucosamine O-acyltransferase"/>
    <property type="match status" value="1"/>
</dbReference>
<dbReference type="Gene3D" id="2.160.10.10">
    <property type="entry name" value="Hexapeptide repeat proteins"/>
    <property type="match status" value="1"/>
</dbReference>
<dbReference type="Gene3D" id="1.20.1180.10">
    <property type="entry name" value="Udp N-acetylglucosamine O-acyltransferase, C-terminal domain"/>
    <property type="match status" value="1"/>
</dbReference>
<dbReference type="HAMAP" id="MF_00387">
    <property type="entry name" value="LpxA"/>
    <property type="match status" value="1"/>
</dbReference>
<dbReference type="InterPro" id="IPR029098">
    <property type="entry name" value="Acetyltransf_C"/>
</dbReference>
<dbReference type="InterPro" id="IPR037157">
    <property type="entry name" value="Acetyltransf_C_sf"/>
</dbReference>
<dbReference type="InterPro" id="IPR001451">
    <property type="entry name" value="Hexapep"/>
</dbReference>
<dbReference type="InterPro" id="IPR018357">
    <property type="entry name" value="Hexapep_transf_CS"/>
</dbReference>
<dbReference type="InterPro" id="IPR010137">
    <property type="entry name" value="Lipid_A_LpxA"/>
</dbReference>
<dbReference type="InterPro" id="IPR011004">
    <property type="entry name" value="Trimer_LpxA-like_sf"/>
</dbReference>
<dbReference type="NCBIfam" id="TIGR01852">
    <property type="entry name" value="lipid_A_lpxA"/>
    <property type="match status" value="1"/>
</dbReference>
<dbReference type="NCBIfam" id="NF003657">
    <property type="entry name" value="PRK05289.1"/>
    <property type="match status" value="1"/>
</dbReference>
<dbReference type="PANTHER" id="PTHR43480">
    <property type="entry name" value="ACYL-[ACYL-CARRIER-PROTEIN]--UDP-N-ACETYLGLUCOSAMINE O-ACYLTRANSFERASE"/>
    <property type="match status" value="1"/>
</dbReference>
<dbReference type="PANTHER" id="PTHR43480:SF1">
    <property type="entry name" value="ACYL-[ACYL-CARRIER-PROTEIN]--UDP-N-ACETYLGLUCOSAMINE O-ACYLTRANSFERASE, MITOCHONDRIAL-RELATED"/>
    <property type="match status" value="1"/>
</dbReference>
<dbReference type="Pfam" id="PF13720">
    <property type="entry name" value="Acetyltransf_11"/>
    <property type="match status" value="1"/>
</dbReference>
<dbReference type="Pfam" id="PF00132">
    <property type="entry name" value="Hexapep"/>
    <property type="match status" value="2"/>
</dbReference>
<dbReference type="PIRSF" id="PIRSF000456">
    <property type="entry name" value="UDP-GlcNAc_acltr"/>
    <property type="match status" value="1"/>
</dbReference>
<dbReference type="SUPFAM" id="SSF51161">
    <property type="entry name" value="Trimeric LpxA-like enzymes"/>
    <property type="match status" value="1"/>
</dbReference>
<dbReference type="PROSITE" id="PS00101">
    <property type="entry name" value="HEXAPEP_TRANSFERASES"/>
    <property type="match status" value="2"/>
</dbReference>
<sequence length="262" mass="28067">MIDKTAFIHPTAIVEEGAVIGANAHIGPFCIVGPDVKIGEGTVLKSHVVVNGHTTIGRDNEIYQFASIGEVNQDLKYAGEPTRVEIGDRNRIRESVTIHRGTAQGGGLTKVGSDNLLMINAHVAHDCTVGNRCILANNATLAGHVSVDDFAIIGGMTAVHQFCIIGAHVMVGGCSGVAQDVPPYVIAQGNHATPFGVNIEGLKRRGFSKEALHAIRNAYKLLYRSGKTLDEVKPEIAEIAAKHPEVQPFYDFFARSTRGLIR</sequence>
<proteinExistence type="inferred from homology"/>